<evidence type="ECO:0000255" key="1">
    <source>
        <dbReference type="HAMAP-Rule" id="MF_01007"/>
    </source>
</evidence>
<organism>
    <name type="scientific">Nocardia farcinica (strain IFM 10152)</name>
    <dbReference type="NCBI Taxonomy" id="247156"/>
    <lineage>
        <taxon>Bacteria</taxon>
        <taxon>Bacillati</taxon>
        <taxon>Actinomycetota</taxon>
        <taxon>Actinomycetes</taxon>
        <taxon>Mycobacteriales</taxon>
        <taxon>Nocardiaceae</taxon>
        <taxon>Nocardia</taxon>
    </lineage>
</organism>
<proteinExistence type="inferred from homology"/>
<feature type="chain" id="PRO_0000108673" description="Ribosomal RNA small subunit methyltransferase H">
    <location>
        <begin position="1"/>
        <end position="324"/>
    </location>
</feature>
<feature type="binding site" evidence="1">
    <location>
        <begin position="41"/>
        <end position="43"/>
    </location>
    <ligand>
        <name>S-adenosyl-L-methionine</name>
        <dbReference type="ChEBI" id="CHEBI:59789"/>
    </ligand>
</feature>
<feature type="binding site" evidence="1">
    <location>
        <position position="60"/>
    </location>
    <ligand>
        <name>S-adenosyl-L-methionine</name>
        <dbReference type="ChEBI" id="CHEBI:59789"/>
    </ligand>
</feature>
<feature type="binding site" evidence="1">
    <location>
        <position position="87"/>
    </location>
    <ligand>
        <name>S-adenosyl-L-methionine</name>
        <dbReference type="ChEBI" id="CHEBI:59789"/>
    </ligand>
</feature>
<feature type="binding site" evidence="1">
    <location>
        <position position="111"/>
    </location>
    <ligand>
        <name>S-adenosyl-L-methionine</name>
        <dbReference type="ChEBI" id="CHEBI:59789"/>
    </ligand>
</feature>
<feature type="binding site" evidence="1">
    <location>
        <position position="118"/>
    </location>
    <ligand>
        <name>S-adenosyl-L-methionine</name>
        <dbReference type="ChEBI" id="CHEBI:59789"/>
    </ligand>
</feature>
<comment type="function">
    <text evidence="1">Specifically methylates the N4 position of cytidine in position 1402 (C1402) of 16S rRNA.</text>
</comment>
<comment type="catalytic activity">
    <reaction evidence="1">
        <text>cytidine(1402) in 16S rRNA + S-adenosyl-L-methionine = N(4)-methylcytidine(1402) in 16S rRNA + S-adenosyl-L-homocysteine + H(+)</text>
        <dbReference type="Rhea" id="RHEA:42928"/>
        <dbReference type="Rhea" id="RHEA-COMP:10286"/>
        <dbReference type="Rhea" id="RHEA-COMP:10287"/>
        <dbReference type="ChEBI" id="CHEBI:15378"/>
        <dbReference type="ChEBI" id="CHEBI:57856"/>
        <dbReference type="ChEBI" id="CHEBI:59789"/>
        <dbReference type="ChEBI" id="CHEBI:74506"/>
        <dbReference type="ChEBI" id="CHEBI:82748"/>
        <dbReference type="EC" id="2.1.1.199"/>
    </reaction>
</comment>
<comment type="subcellular location">
    <subcellularLocation>
        <location evidence="1">Cytoplasm</location>
    </subcellularLocation>
</comment>
<comment type="similarity">
    <text evidence="1">Belongs to the methyltransferase superfamily. RsmH family.</text>
</comment>
<keyword id="KW-0963">Cytoplasm</keyword>
<keyword id="KW-0489">Methyltransferase</keyword>
<keyword id="KW-1185">Reference proteome</keyword>
<keyword id="KW-0698">rRNA processing</keyword>
<keyword id="KW-0949">S-adenosyl-L-methionine</keyword>
<keyword id="KW-0808">Transferase</keyword>
<dbReference type="EC" id="2.1.1.199" evidence="1"/>
<dbReference type="EMBL" id="AP006618">
    <property type="protein sequence ID" value="BAD56604.1"/>
    <property type="molecule type" value="Genomic_DNA"/>
</dbReference>
<dbReference type="RefSeq" id="WP_011208289.1">
    <property type="nucleotide sequence ID" value="NC_006361.1"/>
</dbReference>
<dbReference type="SMR" id="Q5YYY7"/>
<dbReference type="STRING" id="247156.NFA_17580"/>
<dbReference type="GeneID" id="61132539"/>
<dbReference type="KEGG" id="nfa:NFA_17580"/>
<dbReference type="eggNOG" id="COG0275">
    <property type="taxonomic scope" value="Bacteria"/>
</dbReference>
<dbReference type="HOGENOM" id="CLU_038422_0_0_11"/>
<dbReference type="OrthoDB" id="9806637at2"/>
<dbReference type="Proteomes" id="UP000006820">
    <property type="component" value="Chromosome"/>
</dbReference>
<dbReference type="GO" id="GO:0005737">
    <property type="term" value="C:cytoplasm"/>
    <property type="evidence" value="ECO:0007669"/>
    <property type="project" value="UniProtKB-SubCell"/>
</dbReference>
<dbReference type="GO" id="GO:0071424">
    <property type="term" value="F:rRNA (cytosine-N4-)-methyltransferase activity"/>
    <property type="evidence" value="ECO:0007669"/>
    <property type="project" value="UniProtKB-UniRule"/>
</dbReference>
<dbReference type="GO" id="GO:0070475">
    <property type="term" value="P:rRNA base methylation"/>
    <property type="evidence" value="ECO:0007669"/>
    <property type="project" value="UniProtKB-UniRule"/>
</dbReference>
<dbReference type="FunFam" id="1.10.150.170:FF:000001">
    <property type="entry name" value="Ribosomal RNA small subunit methyltransferase H"/>
    <property type="match status" value="1"/>
</dbReference>
<dbReference type="Gene3D" id="1.10.150.170">
    <property type="entry name" value="Putative methyltransferase TM0872, insert domain"/>
    <property type="match status" value="1"/>
</dbReference>
<dbReference type="Gene3D" id="3.40.50.150">
    <property type="entry name" value="Vaccinia Virus protein VP39"/>
    <property type="match status" value="1"/>
</dbReference>
<dbReference type="HAMAP" id="MF_01007">
    <property type="entry name" value="16SrRNA_methyltr_H"/>
    <property type="match status" value="1"/>
</dbReference>
<dbReference type="InterPro" id="IPR002903">
    <property type="entry name" value="RsmH"/>
</dbReference>
<dbReference type="InterPro" id="IPR023397">
    <property type="entry name" value="SAM-dep_MeTrfase_MraW_recog"/>
</dbReference>
<dbReference type="InterPro" id="IPR029063">
    <property type="entry name" value="SAM-dependent_MTases_sf"/>
</dbReference>
<dbReference type="NCBIfam" id="TIGR00006">
    <property type="entry name" value="16S rRNA (cytosine(1402)-N(4))-methyltransferase RsmH"/>
    <property type="match status" value="1"/>
</dbReference>
<dbReference type="PANTHER" id="PTHR11265:SF0">
    <property type="entry name" value="12S RRNA N4-METHYLCYTIDINE METHYLTRANSFERASE"/>
    <property type="match status" value="1"/>
</dbReference>
<dbReference type="PANTHER" id="PTHR11265">
    <property type="entry name" value="S-ADENOSYL-METHYLTRANSFERASE MRAW"/>
    <property type="match status" value="1"/>
</dbReference>
<dbReference type="Pfam" id="PF01795">
    <property type="entry name" value="Methyltransf_5"/>
    <property type="match status" value="1"/>
</dbReference>
<dbReference type="PIRSF" id="PIRSF004486">
    <property type="entry name" value="MraW"/>
    <property type="match status" value="1"/>
</dbReference>
<dbReference type="SUPFAM" id="SSF81799">
    <property type="entry name" value="Putative methyltransferase TM0872, insert domain"/>
    <property type="match status" value="1"/>
</dbReference>
<dbReference type="SUPFAM" id="SSF53335">
    <property type="entry name" value="S-adenosyl-L-methionine-dependent methyltransferases"/>
    <property type="match status" value="1"/>
</dbReference>
<name>RSMH_NOCFA</name>
<accession>Q5YYY7</accession>
<gene>
    <name evidence="1" type="primary">rsmH</name>
    <name type="synonym">mraW</name>
    <name type="ordered locus">NFA_17580</name>
</gene>
<protein>
    <recommendedName>
        <fullName evidence="1">Ribosomal RNA small subunit methyltransferase H</fullName>
        <ecNumber evidence="1">2.1.1.199</ecNumber>
    </recommendedName>
    <alternativeName>
        <fullName evidence="1">16S rRNA m(4)C1402 methyltransferase</fullName>
    </alternativeName>
    <alternativeName>
        <fullName evidence="1">rRNA (cytosine-N(4)-)-methyltransferase RsmH</fullName>
    </alternativeName>
</protein>
<reference key="1">
    <citation type="journal article" date="2004" name="Proc. Natl. Acad. Sci. U.S.A.">
        <title>The complete genomic sequence of Nocardia farcinica IFM 10152.</title>
        <authorList>
            <person name="Ishikawa J."/>
            <person name="Yamashita A."/>
            <person name="Mikami Y."/>
            <person name="Hoshino Y."/>
            <person name="Kurita H."/>
            <person name="Hotta K."/>
            <person name="Shiba T."/>
            <person name="Hattori M."/>
        </authorList>
    </citation>
    <scope>NUCLEOTIDE SEQUENCE [LARGE SCALE GENOMIC DNA]</scope>
    <source>
        <strain>IFM 10152</strain>
    </source>
</reference>
<sequence length="324" mass="35039">MNREQHGARHVPVLLERADELLGPALTEPGAVYVDATLGLGGHAEHFLTRYPGLRLVGLDRDTEALRLAGERLAPFAERITLVHTRYDGIADALGQAGLPPTGSVSAILMDLGVSSMQLDEAERGFAYSVDAPLDMRMDPTSGITAADVLNTYSHGDLARVLKNYGEERFAGKIASEVIRRRAHKPFETSGELVELLYATIPAAARRTGGHPAKRTFQALRVEVNGELDSLRAALPAALDALRVGGRIVVMSYQSLEDRVVKQELAARTSSRTPVDLPVELPGMGPEFRLLTRGAEKAGEREIAENPRAAPVRMRAAERIEAAS</sequence>